<proteinExistence type="inferred from homology"/>
<protein>
    <recommendedName>
        <fullName evidence="1">DNA polymerase IV</fullName>
        <shortName evidence="1">Pol IV</shortName>
        <ecNumber evidence="1">2.7.7.7</ecNumber>
    </recommendedName>
</protein>
<dbReference type="EC" id="2.7.7.7" evidence="1"/>
<dbReference type="EMBL" id="CP000388">
    <property type="protein sequence ID" value="ABG38990.1"/>
    <property type="molecule type" value="Genomic_DNA"/>
</dbReference>
<dbReference type="RefSeq" id="WP_011573383.1">
    <property type="nucleotide sequence ID" value="NC_008228.1"/>
</dbReference>
<dbReference type="SMR" id="Q15YP8"/>
<dbReference type="STRING" id="342610.Patl_0460"/>
<dbReference type="KEGG" id="pat:Patl_0460"/>
<dbReference type="eggNOG" id="COG0389">
    <property type="taxonomic scope" value="Bacteria"/>
</dbReference>
<dbReference type="HOGENOM" id="CLU_012348_1_2_6"/>
<dbReference type="OrthoDB" id="9808813at2"/>
<dbReference type="Proteomes" id="UP000001981">
    <property type="component" value="Chromosome"/>
</dbReference>
<dbReference type="GO" id="GO:0005829">
    <property type="term" value="C:cytosol"/>
    <property type="evidence" value="ECO:0007669"/>
    <property type="project" value="TreeGrafter"/>
</dbReference>
<dbReference type="GO" id="GO:0003684">
    <property type="term" value="F:damaged DNA binding"/>
    <property type="evidence" value="ECO:0007669"/>
    <property type="project" value="InterPro"/>
</dbReference>
<dbReference type="GO" id="GO:0003887">
    <property type="term" value="F:DNA-directed DNA polymerase activity"/>
    <property type="evidence" value="ECO:0007669"/>
    <property type="project" value="UniProtKB-UniRule"/>
</dbReference>
<dbReference type="GO" id="GO:0000287">
    <property type="term" value="F:magnesium ion binding"/>
    <property type="evidence" value="ECO:0007669"/>
    <property type="project" value="UniProtKB-UniRule"/>
</dbReference>
<dbReference type="GO" id="GO:0006261">
    <property type="term" value="P:DNA-templated DNA replication"/>
    <property type="evidence" value="ECO:0007669"/>
    <property type="project" value="UniProtKB-UniRule"/>
</dbReference>
<dbReference type="GO" id="GO:0042276">
    <property type="term" value="P:error-prone translesion synthesis"/>
    <property type="evidence" value="ECO:0007669"/>
    <property type="project" value="TreeGrafter"/>
</dbReference>
<dbReference type="GO" id="GO:0009432">
    <property type="term" value="P:SOS response"/>
    <property type="evidence" value="ECO:0007669"/>
    <property type="project" value="TreeGrafter"/>
</dbReference>
<dbReference type="CDD" id="cd03586">
    <property type="entry name" value="PolY_Pol_IV_kappa"/>
    <property type="match status" value="1"/>
</dbReference>
<dbReference type="FunFam" id="1.10.150.20:FF:000019">
    <property type="entry name" value="DNA polymerase IV"/>
    <property type="match status" value="1"/>
</dbReference>
<dbReference type="FunFam" id="3.40.1170.60:FF:000001">
    <property type="entry name" value="DNA polymerase IV"/>
    <property type="match status" value="1"/>
</dbReference>
<dbReference type="Gene3D" id="3.30.70.270">
    <property type="match status" value="1"/>
</dbReference>
<dbReference type="Gene3D" id="3.40.1170.60">
    <property type="match status" value="1"/>
</dbReference>
<dbReference type="Gene3D" id="1.10.150.20">
    <property type="entry name" value="5' to 3' exonuclease, C-terminal subdomain"/>
    <property type="match status" value="1"/>
</dbReference>
<dbReference type="Gene3D" id="3.30.1490.100">
    <property type="entry name" value="DNA polymerase, Y-family, little finger domain"/>
    <property type="match status" value="1"/>
</dbReference>
<dbReference type="HAMAP" id="MF_01113">
    <property type="entry name" value="DNApol_IV"/>
    <property type="match status" value="1"/>
</dbReference>
<dbReference type="InterPro" id="IPR043502">
    <property type="entry name" value="DNA/RNA_pol_sf"/>
</dbReference>
<dbReference type="InterPro" id="IPR036775">
    <property type="entry name" value="DNA_pol_Y-fam_lit_finger_sf"/>
</dbReference>
<dbReference type="InterPro" id="IPR017961">
    <property type="entry name" value="DNA_pol_Y-fam_little_finger"/>
</dbReference>
<dbReference type="InterPro" id="IPR050116">
    <property type="entry name" value="DNA_polymerase-Y"/>
</dbReference>
<dbReference type="InterPro" id="IPR022880">
    <property type="entry name" value="DNApol_IV"/>
</dbReference>
<dbReference type="InterPro" id="IPR053848">
    <property type="entry name" value="IMS_HHH_1"/>
</dbReference>
<dbReference type="InterPro" id="IPR043128">
    <property type="entry name" value="Rev_trsase/Diguanyl_cyclase"/>
</dbReference>
<dbReference type="InterPro" id="IPR001126">
    <property type="entry name" value="UmuC"/>
</dbReference>
<dbReference type="NCBIfam" id="NF002677">
    <property type="entry name" value="PRK02406.1"/>
    <property type="match status" value="1"/>
</dbReference>
<dbReference type="PANTHER" id="PTHR11076:SF33">
    <property type="entry name" value="DNA POLYMERASE KAPPA"/>
    <property type="match status" value="1"/>
</dbReference>
<dbReference type="PANTHER" id="PTHR11076">
    <property type="entry name" value="DNA REPAIR POLYMERASE UMUC / TRANSFERASE FAMILY MEMBER"/>
    <property type="match status" value="1"/>
</dbReference>
<dbReference type="Pfam" id="PF00817">
    <property type="entry name" value="IMS"/>
    <property type="match status" value="1"/>
</dbReference>
<dbReference type="Pfam" id="PF11799">
    <property type="entry name" value="IMS_C"/>
    <property type="match status" value="1"/>
</dbReference>
<dbReference type="Pfam" id="PF21999">
    <property type="entry name" value="IMS_HHH_1"/>
    <property type="match status" value="1"/>
</dbReference>
<dbReference type="SUPFAM" id="SSF56672">
    <property type="entry name" value="DNA/RNA polymerases"/>
    <property type="match status" value="1"/>
</dbReference>
<dbReference type="SUPFAM" id="SSF100879">
    <property type="entry name" value="Lesion bypass DNA polymerase (Y-family), little finger domain"/>
    <property type="match status" value="1"/>
</dbReference>
<dbReference type="PROSITE" id="PS50173">
    <property type="entry name" value="UMUC"/>
    <property type="match status" value="1"/>
</dbReference>
<gene>
    <name evidence="1" type="primary">dinB</name>
    <name type="ordered locus">Patl_0460</name>
</gene>
<keyword id="KW-0963">Cytoplasm</keyword>
<keyword id="KW-0227">DNA damage</keyword>
<keyword id="KW-0234">DNA repair</keyword>
<keyword id="KW-0235">DNA replication</keyword>
<keyword id="KW-0238">DNA-binding</keyword>
<keyword id="KW-0239">DNA-directed DNA polymerase</keyword>
<keyword id="KW-0460">Magnesium</keyword>
<keyword id="KW-0479">Metal-binding</keyword>
<keyword id="KW-0515">Mutator protein</keyword>
<keyword id="KW-0548">Nucleotidyltransferase</keyword>
<keyword id="KW-0808">Transferase</keyword>
<reference key="1">
    <citation type="submission" date="2006-06" db="EMBL/GenBank/DDBJ databases">
        <title>Complete sequence of Pseudoalteromonas atlantica T6c.</title>
        <authorList>
            <consortium name="US DOE Joint Genome Institute"/>
            <person name="Copeland A."/>
            <person name="Lucas S."/>
            <person name="Lapidus A."/>
            <person name="Barry K."/>
            <person name="Detter J.C."/>
            <person name="Glavina del Rio T."/>
            <person name="Hammon N."/>
            <person name="Israni S."/>
            <person name="Dalin E."/>
            <person name="Tice H."/>
            <person name="Pitluck S."/>
            <person name="Saunders E."/>
            <person name="Brettin T."/>
            <person name="Bruce D."/>
            <person name="Han C."/>
            <person name="Tapia R."/>
            <person name="Gilna P."/>
            <person name="Schmutz J."/>
            <person name="Larimer F."/>
            <person name="Land M."/>
            <person name="Hauser L."/>
            <person name="Kyrpides N."/>
            <person name="Kim E."/>
            <person name="Karls A.C."/>
            <person name="Bartlett D."/>
            <person name="Higgins B.P."/>
            <person name="Richardson P."/>
        </authorList>
    </citation>
    <scope>NUCLEOTIDE SEQUENCE [LARGE SCALE GENOMIC DNA]</scope>
    <source>
        <strain>T6c / ATCC BAA-1087</strain>
    </source>
</reference>
<sequence>MRKIIHIDMDCYYAAVEMRDNPQYRDIPLAIGGSADRRGVISTCNYVARKYGVRSAMATAYARKLCPDLVLVPGRMALYSEISQQIRKIFLRYTDKIEPLSLDEAYLDVTDSELFSGSATLIAQDIRRAIFEETQLTASAGVAPCKFVAKIASDENKPNGICVITPDTQDAFVKTLALGKIPGVGKVTLQKLNNMGLFTCQDVRDYPLDAFVKAFGKFGPVIWDRSHGIDERELSVSRKRKSVGVERTLAQDITTDEECLAMLESLYPKLLSRLEAASPKLAIQSQGVKLKFNDFQQTTVEHRHQVLDKTYFKTLLSEALERRGTRGIRLVGLSVGLPETADVQQMVFNFEHEQNR</sequence>
<organism>
    <name type="scientific">Pseudoalteromonas atlantica (strain T6c / ATCC BAA-1087)</name>
    <dbReference type="NCBI Taxonomy" id="3042615"/>
    <lineage>
        <taxon>Bacteria</taxon>
        <taxon>Pseudomonadati</taxon>
        <taxon>Pseudomonadota</taxon>
        <taxon>Gammaproteobacteria</taxon>
        <taxon>Alteromonadales</taxon>
        <taxon>Alteromonadaceae</taxon>
        <taxon>Paraglaciecola</taxon>
    </lineage>
</organism>
<feature type="chain" id="PRO_1000084910" description="DNA polymerase IV">
    <location>
        <begin position="1"/>
        <end position="356"/>
    </location>
</feature>
<feature type="domain" description="UmuC" evidence="1">
    <location>
        <begin position="4"/>
        <end position="185"/>
    </location>
</feature>
<feature type="active site" evidence="1">
    <location>
        <position position="104"/>
    </location>
</feature>
<feature type="binding site" evidence="1">
    <location>
        <position position="8"/>
    </location>
    <ligand>
        <name>Mg(2+)</name>
        <dbReference type="ChEBI" id="CHEBI:18420"/>
    </ligand>
</feature>
<feature type="binding site" evidence="1">
    <location>
        <position position="103"/>
    </location>
    <ligand>
        <name>Mg(2+)</name>
        <dbReference type="ChEBI" id="CHEBI:18420"/>
    </ligand>
</feature>
<feature type="site" description="Substrate discrimination" evidence="1">
    <location>
        <position position="13"/>
    </location>
</feature>
<comment type="function">
    <text evidence="1">Poorly processive, error-prone DNA polymerase involved in untargeted mutagenesis. Copies undamaged DNA at stalled replication forks, which arise in vivo from mismatched or misaligned primer ends. These misaligned primers can be extended by PolIV. Exhibits no 3'-5' exonuclease (proofreading) activity. May be involved in translesional synthesis, in conjunction with the beta clamp from PolIII.</text>
</comment>
<comment type="catalytic activity">
    <reaction evidence="1">
        <text>DNA(n) + a 2'-deoxyribonucleoside 5'-triphosphate = DNA(n+1) + diphosphate</text>
        <dbReference type="Rhea" id="RHEA:22508"/>
        <dbReference type="Rhea" id="RHEA-COMP:17339"/>
        <dbReference type="Rhea" id="RHEA-COMP:17340"/>
        <dbReference type="ChEBI" id="CHEBI:33019"/>
        <dbReference type="ChEBI" id="CHEBI:61560"/>
        <dbReference type="ChEBI" id="CHEBI:173112"/>
        <dbReference type="EC" id="2.7.7.7"/>
    </reaction>
</comment>
<comment type="cofactor">
    <cofactor evidence="1">
        <name>Mg(2+)</name>
        <dbReference type="ChEBI" id="CHEBI:18420"/>
    </cofactor>
    <text evidence="1">Binds 2 magnesium ions per subunit.</text>
</comment>
<comment type="subunit">
    <text evidence="1">Monomer.</text>
</comment>
<comment type="subcellular location">
    <subcellularLocation>
        <location evidence="1">Cytoplasm</location>
    </subcellularLocation>
</comment>
<comment type="similarity">
    <text evidence="1">Belongs to the DNA polymerase type-Y family.</text>
</comment>
<name>DPO4_PSEA6</name>
<evidence type="ECO:0000255" key="1">
    <source>
        <dbReference type="HAMAP-Rule" id="MF_01113"/>
    </source>
</evidence>
<accession>Q15YP8</accession>